<feature type="chain" id="PRO_0000123452" description="Unconventional myosin-If">
    <location>
        <begin position="1"/>
        <end position="1098"/>
    </location>
</feature>
<feature type="domain" description="Myosin motor" evidence="5">
    <location>
        <begin position="17"/>
        <end position="690"/>
    </location>
</feature>
<feature type="domain" description="IQ" evidence="3">
    <location>
        <begin position="693"/>
        <end position="722"/>
    </location>
</feature>
<feature type="domain" description="TH1" evidence="6">
    <location>
        <begin position="728"/>
        <end position="917"/>
    </location>
</feature>
<feature type="domain" description="SH3" evidence="4">
    <location>
        <begin position="1041"/>
        <end position="1098"/>
    </location>
</feature>
<feature type="region of interest" description="Actin-binding" evidence="2">
    <location>
        <begin position="579"/>
        <end position="589"/>
    </location>
</feature>
<feature type="region of interest" description="Disordered" evidence="7">
    <location>
        <begin position="913"/>
        <end position="1009"/>
    </location>
</feature>
<feature type="region of interest" description="Disordered" evidence="7">
    <location>
        <begin position="1021"/>
        <end position="1044"/>
    </location>
</feature>
<feature type="compositionally biased region" description="Basic residues" evidence="7">
    <location>
        <begin position="924"/>
        <end position="937"/>
    </location>
</feature>
<feature type="binding site" evidence="2">
    <location>
        <begin position="110"/>
        <end position="117"/>
    </location>
    <ligand>
        <name>ATP</name>
        <dbReference type="ChEBI" id="CHEBI:30616"/>
    </ligand>
</feature>
<feature type="modified residue" description="Phosphoserine" evidence="10">
    <location>
        <position position="1023"/>
    </location>
</feature>
<feature type="sequence variant" id="VAR_079873" description="Found in a patient with non-syndromic sensorineural hearing loss; likely pathogenic; dbSNP:rs200797032." evidence="8">
    <original>I</original>
    <variation>V</variation>
    <location>
        <position position="502"/>
    </location>
</feature>
<feature type="sequence variant" id="VAR_056179" description="In dbSNP:rs2288411.">
    <original>P</original>
    <variation>L</variation>
    <location>
        <position position="960"/>
    </location>
</feature>
<feature type="sequence conflict" description="In Ref. 2; BAC03995." evidence="9" ref="2">
    <original>A</original>
    <variation>V</variation>
    <location>
        <position position="259"/>
    </location>
</feature>
<feature type="sequence conflict" description="In Ref. 5; CAA67058." evidence="9" ref="5">
    <original>TSE</original>
    <variation>SSD</variation>
    <location>
        <begin position="534"/>
        <end position="536"/>
    </location>
</feature>
<feature type="sequence conflict" description="In Ref. 1; CAC83948 and 5; CAA67058." evidence="9" ref="1 5">
    <original>RP</original>
    <variation>HA</variation>
    <location>
        <begin position="592"/>
        <end position="593"/>
    </location>
</feature>
<feature type="sequence conflict" description="In Ref. 5; CAA67058." evidence="9" ref="5">
    <original>K</original>
    <variation>Q</variation>
    <location>
        <position position="602"/>
    </location>
</feature>
<feature type="sequence conflict" description="In Ref. 1; CAC83948 and 5; CAA67058." evidence="9" ref="1 5">
    <original>R</original>
    <variation>K</variation>
    <location>
        <position position="759"/>
    </location>
</feature>
<feature type="sequence conflict" description="In Ref. 1; CAC83948 and 5; CAA67058." evidence="9" ref="1 5">
    <original>V</original>
    <variation>M</variation>
    <location>
        <position position="797"/>
    </location>
</feature>
<feature type="sequence conflict" description="In Ref. 5; CAA67058." evidence="9" ref="5">
    <original>Q</original>
    <variation>P</variation>
    <location>
        <position position="805"/>
    </location>
</feature>
<feature type="sequence conflict" description="In Ref. 5; CAA67058." evidence="9" ref="5">
    <original>V</original>
    <variation>I</variation>
    <location>
        <position position="809"/>
    </location>
</feature>
<feature type="sequence conflict" description="In Ref. 5; CAA67058." evidence="9" ref="5">
    <original>V</original>
    <variation>L</variation>
    <location>
        <position position="814"/>
    </location>
</feature>
<feature type="sequence conflict" description="In Ref. 5; CAA67058." evidence="9" ref="5">
    <original>S</original>
    <variation>N</variation>
    <location>
        <position position="922"/>
    </location>
</feature>
<feature type="sequence conflict" description="In Ref. 5; CAA67058." evidence="9" ref="5">
    <original>R</original>
    <variation>G</variation>
    <location>
        <position position="927"/>
    </location>
</feature>
<feature type="sequence conflict" description="In Ref. 5; CAA67058." evidence="9" ref="5">
    <original>M</original>
    <variation>L</variation>
    <location>
        <position position="930"/>
    </location>
</feature>
<feature type="sequence conflict" description="In Ref. 5; CAA67058." evidence="9" ref="5">
    <original>APPR</original>
    <variation>GAPQ</variation>
    <location>
        <begin position="948"/>
        <end position="951"/>
    </location>
</feature>
<feature type="sequence conflict" description="In Ref. 5; CAA67058." evidence="9" ref="5">
    <original>VPPSARGGPL</original>
    <variation>APLCPQGGAPC</variation>
    <location>
        <begin position="958"/>
        <end position="967"/>
    </location>
</feature>
<feature type="sequence conflict" description="In Ref. 5; CAA67058." evidence="9" ref="5">
    <original>IMSGGGTHRPPRGPPSTSLG</original>
    <variation>KFIWPRGHPQASPALRPHPWD</variation>
    <location>
        <begin position="971"/>
        <end position="990"/>
    </location>
</feature>
<feature type="sequence conflict" description="In Ref. 5; CAA67058." evidence="9" ref="5">
    <location>
        <position position="1031"/>
    </location>
</feature>
<feature type="sequence conflict" description="In Ref. 2; BAC03995." evidence="9" ref="2">
    <original>FPGNYVEKI</original>
    <variation>GSPSARSPA</variation>
    <location>
        <begin position="1090"/>
        <end position="1098"/>
    </location>
</feature>
<organism>
    <name type="scientific">Homo sapiens</name>
    <name type="common">Human</name>
    <dbReference type="NCBI Taxonomy" id="9606"/>
    <lineage>
        <taxon>Eukaryota</taxon>
        <taxon>Metazoa</taxon>
        <taxon>Chordata</taxon>
        <taxon>Craniata</taxon>
        <taxon>Vertebrata</taxon>
        <taxon>Euteleostomi</taxon>
        <taxon>Mammalia</taxon>
        <taxon>Eutheria</taxon>
        <taxon>Euarchontoglires</taxon>
        <taxon>Primates</taxon>
        <taxon>Haplorrhini</taxon>
        <taxon>Catarrhini</taxon>
        <taxon>Hominidae</taxon>
        <taxon>Homo</taxon>
    </lineage>
</organism>
<accession>O00160</accession>
<accession>Q8WWN7</accession>
<evidence type="ECO:0000250" key="1"/>
<evidence type="ECO:0000255" key="2"/>
<evidence type="ECO:0000255" key="3">
    <source>
        <dbReference type="PROSITE-ProRule" id="PRU00116"/>
    </source>
</evidence>
<evidence type="ECO:0000255" key="4">
    <source>
        <dbReference type="PROSITE-ProRule" id="PRU00192"/>
    </source>
</evidence>
<evidence type="ECO:0000255" key="5">
    <source>
        <dbReference type="PROSITE-ProRule" id="PRU00782"/>
    </source>
</evidence>
<evidence type="ECO:0000255" key="6">
    <source>
        <dbReference type="PROSITE-ProRule" id="PRU01093"/>
    </source>
</evidence>
<evidence type="ECO:0000256" key="7">
    <source>
        <dbReference type="SAM" id="MobiDB-lite"/>
    </source>
</evidence>
<evidence type="ECO:0000269" key="8">
    <source>
    </source>
</evidence>
<evidence type="ECO:0000305" key="9"/>
<evidence type="ECO:0007744" key="10">
    <source>
    </source>
</evidence>
<gene>
    <name type="primary">MYO1F</name>
</gene>
<keyword id="KW-0009">Actin-binding</keyword>
<keyword id="KW-0067">ATP-binding</keyword>
<keyword id="KW-0112">Calmodulin-binding</keyword>
<keyword id="KW-0209">Deafness</keyword>
<keyword id="KW-0225">Disease variant</keyword>
<keyword id="KW-0505">Motor protein</keyword>
<keyword id="KW-0518">Myosin</keyword>
<keyword id="KW-1010">Non-syndromic deafness</keyword>
<keyword id="KW-0547">Nucleotide-binding</keyword>
<keyword id="KW-0597">Phosphoprotein</keyword>
<keyword id="KW-1267">Proteomics identification</keyword>
<keyword id="KW-1185">Reference proteome</keyword>
<keyword id="KW-0728">SH3 domain</keyword>
<reference key="1">
    <citation type="journal article" date="2002" name="Mol. Cell">
        <title>Identification of ARAP3, a novel PI3K effector regulating both Arf and Rho GTPases, by selective capture on phosphoinositide affinity matrices.</title>
        <authorList>
            <person name="Krugmann S."/>
            <person name="Anderson K.E."/>
            <person name="Ridley S.H."/>
            <person name="Risso N."/>
            <person name="McGregor A."/>
            <person name="Coadwell J."/>
            <person name="Davidson K."/>
            <person name="Eguinoa A."/>
            <person name="Ellson C.D."/>
            <person name="Lipp P."/>
            <person name="Manifava M."/>
            <person name="Ktistakis N."/>
            <person name="Painter G."/>
            <person name="Thuring J.W."/>
            <person name="Cooper M.A."/>
            <person name="Lim Z.-Y."/>
            <person name="Holmes A.B."/>
            <person name="Dove S.K."/>
            <person name="Michell R.H."/>
            <person name="Grewal A."/>
            <person name="Nazarian A."/>
            <person name="Erdjument-Bromage H."/>
            <person name="Tempst P."/>
            <person name="Stephens L.R."/>
            <person name="Hawkins P.T."/>
        </authorList>
    </citation>
    <scope>NUCLEOTIDE SEQUENCE [MRNA]</scope>
</reference>
<reference key="2">
    <citation type="journal article" date="2004" name="Nat. Genet.">
        <title>Complete sequencing and characterization of 21,243 full-length human cDNAs.</title>
        <authorList>
            <person name="Ota T."/>
            <person name="Suzuki Y."/>
            <person name="Nishikawa T."/>
            <person name="Otsuki T."/>
            <person name="Sugiyama T."/>
            <person name="Irie R."/>
            <person name="Wakamatsu A."/>
            <person name="Hayashi K."/>
            <person name="Sato H."/>
            <person name="Nagai K."/>
            <person name="Kimura K."/>
            <person name="Makita H."/>
            <person name="Sekine M."/>
            <person name="Obayashi M."/>
            <person name="Nishi T."/>
            <person name="Shibahara T."/>
            <person name="Tanaka T."/>
            <person name="Ishii S."/>
            <person name="Yamamoto J."/>
            <person name="Saito K."/>
            <person name="Kawai Y."/>
            <person name="Isono Y."/>
            <person name="Nakamura Y."/>
            <person name="Nagahari K."/>
            <person name="Murakami K."/>
            <person name="Yasuda T."/>
            <person name="Iwayanagi T."/>
            <person name="Wagatsuma M."/>
            <person name="Shiratori A."/>
            <person name="Sudo H."/>
            <person name="Hosoiri T."/>
            <person name="Kaku Y."/>
            <person name="Kodaira H."/>
            <person name="Kondo H."/>
            <person name="Sugawara M."/>
            <person name="Takahashi M."/>
            <person name="Kanda K."/>
            <person name="Yokoi T."/>
            <person name="Furuya T."/>
            <person name="Kikkawa E."/>
            <person name="Omura Y."/>
            <person name="Abe K."/>
            <person name="Kamihara K."/>
            <person name="Katsuta N."/>
            <person name="Sato K."/>
            <person name="Tanikawa M."/>
            <person name="Yamazaki M."/>
            <person name="Ninomiya K."/>
            <person name="Ishibashi T."/>
            <person name="Yamashita H."/>
            <person name="Murakawa K."/>
            <person name="Fujimori K."/>
            <person name="Tanai H."/>
            <person name="Kimata M."/>
            <person name="Watanabe M."/>
            <person name="Hiraoka S."/>
            <person name="Chiba Y."/>
            <person name="Ishida S."/>
            <person name="Ono Y."/>
            <person name="Takiguchi S."/>
            <person name="Watanabe S."/>
            <person name="Yosida M."/>
            <person name="Hotuta T."/>
            <person name="Kusano J."/>
            <person name="Kanehori K."/>
            <person name="Takahashi-Fujii A."/>
            <person name="Hara H."/>
            <person name="Tanase T.-O."/>
            <person name="Nomura Y."/>
            <person name="Togiya S."/>
            <person name="Komai F."/>
            <person name="Hara R."/>
            <person name="Takeuchi K."/>
            <person name="Arita M."/>
            <person name="Imose N."/>
            <person name="Musashino K."/>
            <person name="Yuuki H."/>
            <person name="Oshima A."/>
            <person name="Sasaki N."/>
            <person name="Aotsuka S."/>
            <person name="Yoshikawa Y."/>
            <person name="Matsunawa H."/>
            <person name="Ichihara T."/>
            <person name="Shiohata N."/>
            <person name="Sano S."/>
            <person name="Moriya S."/>
            <person name="Momiyama H."/>
            <person name="Satoh N."/>
            <person name="Takami S."/>
            <person name="Terashima Y."/>
            <person name="Suzuki O."/>
            <person name="Nakagawa S."/>
            <person name="Senoh A."/>
            <person name="Mizoguchi H."/>
            <person name="Goto Y."/>
            <person name="Shimizu F."/>
            <person name="Wakebe H."/>
            <person name="Hishigaki H."/>
            <person name="Watanabe T."/>
            <person name="Sugiyama A."/>
            <person name="Takemoto M."/>
            <person name="Kawakami B."/>
            <person name="Yamazaki M."/>
            <person name="Watanabe K."/>
            <person name="Kumagai A."/>
            <person name="Itakura S."/>
            <person name="Fukuzumi Y."/>
            <person name="Fujimori Y."/>
            <person name="Komiyama M."/>
            <person name="Tashiro H."/>
            <person name="Tanigami A."/>
            <person name="Fujiwara T."/>
            <person name="Ono T."/>
            <person name="Yamada K."/>
            <person name="Fujii Y."/>
            <person name="Ozaki K."/>
            <person name="Hirao M."/>
            <person name="Ohmori Y."/>
            <person name="Kawabata A."/>
            <person name="Hikiji T."/>
            <person name="Kobatake N."/>
            <person name="Inagaki H."/>
            <person name="Ikema Y."/>
            <person name="Okamoto S."/>
            <person name="Okitani R."/>
            <person name="Kawakami T."/>
            <person name="Noguchi S."/>
            <person name="Itoh T."/>
            <person name="Shigeta K."/>
            <person name="Senba T."/>
            <person name="Matsumura K."/>
            <person name="Nakajima Y."/>
            <person name="Mizuno T."/>
            <person name="Morinaga M."/>
            <person name="Sasaki M."/>
            <person name="Togashi T."/>
            <person name="Oyama M."/>
            <person name="Hata H."/>
            <person name="Watanabe M."/>
            <person name="Komatsu T."/>
            <person name="Mizushima-Sugano J."/>
            <person name="Satoh T."/>
            <person name="Shirai Y."/>
            <person name="Takahashi Y."/>
            <person name="Nakagawa K."/>
            <person name="Okumura K."/>
            <person name="Nagase T."/>
            <person name="Nomura N."/>
            <person name="Kikuchi H."/>
            <person name="Masuho Y."/>
            <person name="Yamashita R."/>
            <person name="Nakai K."/>
            <person name="Yada T."/>
            <person name="Nakamura Y."/>
            <person name="Ohara O."/>
            <person name="Isogai T."/>
            <person name="Sugano S."/>
        </authorList>
    </citation>
    <scope>NUCLEOTIDE SEQUENCE [LARGE SCALE MRNA]</scope>
    <source>
        <tissue>Spleen</tissue>
    </source>
</reference>
<reference key="3">
    <citation type="journal article" date="2004" name="Nature">
        <title>The DNA sequence and biology of human chromosome 19.</title>
        <authorList>
            <person name="Grimwood J."/>
            <person name="Gordon L.A."/>
            <person name="Olsen A.S."/>
            <person name="Terry A."/>
            <person name="Schmutz J."/>
            <person name="Lamerdin J.E."/>
            <person name="Hellsten U."/>
            <person name="Goodstein D."/>
            <person name="Couronne O."/>
            <person name="Tran-Gyamfi M."/>
            <person name="Aerts A."/>
            <person name="Altherr M."/>
            <person name="Ashworth L."/>
            <person name="Bajorek E."/>
            <person name="Black S."/>
            <person name="Branscomb E."/>
            <person name="Caenepeel S."/>
            <person name="Carrano A.V."/>
            <person name="Caoile C."/>
            <person name="Chan Y.M."/>
            <person name="Christensen M."/>
            <person name="Cleland C.A."/>
            <person name="Copeland A."/>
            <person name="Dalin E."/>
            <person name="Dehal P."/>
            <person name="Denys M."/>
            <person name="Detter J.C."/>
            <person name="Escobar J."/>
            <person name="Flowers D."/>
            <person name="Fotopulos D."/>
            <person name="Garcia C."/>
            <person name="Georgescu A.M."/>
            <person name="Glavina T."/>
            <person name="Gomez M."/>
            <person name="Gonzales E."/>
            <person name="Groza M."/>
            <person name="Hammon N."/>
            <person name="Hawkins T."/>
            <person name="Haydu L."/>
            <person name="Ho I."/>
            <person name="Huang W."/>
            <person name="Israni S."/>
            <person name="Jett J."/>
            <person name="Kadner K."/>
            <person name="Kimball H."/>
            <person name="Kobayashi A."/>
            <person name="Larionov V."/>
            <person name="Leem S.-H."/>
            <person name="Lopez F."/>
            <person name="Lou Y."/>
            <person name="Lowry S."/>
            <person name="Malfatti S."/>
            <person name="Martinez D."/>
            <person name="McCready P.M."/>
            <person name="Medina C."/>
            <person name="Morgan J."/>
            <person name="Nelson K."/>
            <person name="Nolan M."/>
            <person name="Ovcharenko I."/>
            <person name="Pitluck S."/>
            <person name="Pollard M."/>
            <person name="Popkie A.P."/>
            <person name="Predki P."/>
            <person name="Quan G."/>
            <person name="Ramirez L."/>
            <person name="Rash S."/>
            <person name="Retterer J."/>
            <person name="Rodriguez A."/>
            <person name="Rogers S."/>
            <person name="Salamov A."/>
            <person name="Salazar A."/>
            <person name="She X."/>
            <person name="Smith D."/>
            <person name="Slezak T."/>
            <person name="Solovyev V."/>
            <person name="Thayer N."/>
            <person name="Tice H."/>
            <person name="Tsai M."/>
            <person name="Ustaszewska A."/>
            <person name="Vo N."/>
            <person name="Wagner M."/>
            <person name="Wheeler J."/>
            <person name="Wu K."/>
            <person name="Xie G."/>
            <person name="Yang J."/>
            <person name="Dubchak I."/>
            <person name="Furey T.S."/>
            <person name="DeJong P."/>
            <person name="Dickson M."/>
            <person name="Gordon D."/>
            <person name="Eichler E.E."/>
            <person name="Pennacchio L.A."/>
            <person name="Richardson P."/>
            <person name="Stubbs L."/>
            <person name="Rokhsar D.S."/>
            <person name="Myers R.M."/>
            <person name="Rubin E.M."/>
            <person name="Lucas S.M."/>
        </authorList>
    </citation>
    <scope>NUCLEOTIDE SEQUENCE [LARGE SCALE GENOMIC DNA]</scope>
</reference>
<reference key="4">
    <citation type="journal article" date="2004" name="Genome Res.">
        <title>The status, quality, and expansion of the NIH full-length cDNA project: the Mammalian Gene Collection (MGC).</title>
        <authorList>
            <consortium name="The MGC Project Team"/>
        </authorList>
    </citation>
    <scope>NUCLEOTIDE SEQUENCE [LARGE SCALE MRNA]</scope>
    <source>
        <tissue>Blood</tissue>
    </source>
</reference>
<reference key="5">
    <citation type="journal article" date="1997" name="Genomics">
        <title>Cloning of the genes encoding two murine and human cochlear unconventional type I myosins.</title>
        <authorList>
            <person name="Crozet F."/>
            <person name="El-Amraoui A."/>
            <person name="Blanchard S."/>
            <person name="Lenoir M."/>
            <person name="Ripoll C."/>
            <person name="Vago P."/>
            <person name="Hamel C."/>
            <person name="Fizames C."/>
            <person name="Levi-Acobas F."/>
            <person name="Depetris D."/>
            <person name="Mattei M.-G."/>
            <person name="Weil D."/>
            <person name="Pujol R."/>
            <person name="Petit C."/>
        </authorList>
    </citation>
    <scope>NUCLEOTIDE SEQUENCE [MRNA] OF 318-1098</scope>
    <source>
        <tissue>Retina</tissue>
    </source>
</reference>
<reference key="6">
    <citation type="journal article" date="2008" name="J. Proteome Res.">
        <title>Phosphorylation analysis of primary human T lymphocytes using sequential IMAC and titanium oxide enrichment.</title>
        <authorList>
            <person name="Carrascal M."/>
            <person name="Ovelleiro D."/>
            <person name="Casas V."/>
            <person name="Gay M."/>
            <person name="Abian J."/>
        </authorList>
    </citation>
    <scope>PHOSPHORYLATION [LARGE SCALE ANALYSIS] AT SER-1023</scope>
    <scope>IDENTIFICATION BY MASS SPECTROMETRY [LARGE SCALE ANALYSIS]</scope>
    <source>
        <tissue>T-cell</tissue>
    </source>
</reference>
<reference key="7">
    <citation type="journal article" date="2012" name="Orphanet J. Rare Dis.">
        <title>Targeted massive parallel sequencing: the effective detection of novel causative mutations associated with hearing loss in small families.</title>
        <authorList>
            <person name="Baek J.I."/>
            <person name="Oh S.K."/>
            <person name="Kim D.B."/>
            <person name="Choi S.Y."/>
            <person name="Kim U.K."/>
            <person name="Lee K.Y."/>
            <person name="Lee S.H."/>
        </authorList>
    </citation>
    <scope>VARIANT VAL-502</scope>
</reference>
<sequence>MGSKERFHWQSHNVKQSGVDDMVLLPQITEDAIAANLRKRFMDDYIFTYIGSVLISVNPFKQMPYFTDREIDLYQGAAQYENPPHIYALTDNMYRNMLIDCENQCVIISGESGAGKTVAAKYIMGYISKVSGGGEKVQHVKDIILQSNPLLEAFGNAKTVRNNNSSRFGKYFEIQFSRGGEPDGGKISNFLLEKSRVVMQNENERNFHIYYQLLEGASQEQRQNLGLMTPDYYYYLNQSDTYQVDGTDDRSDFGETLSAMQVIGIPPSIQQLVLQLVAGILHLGNISFCEDGNYARVESVDLLAFPAYLLGIDSGRLQEKLTSRKMDSRWGGRSESINVTLNVEQAAYTRDALAKGLYARLFDFLVEAINRAMQKPQEEYSIGVLDIYGFEIFQKNGFEQFCINFVNEKLQQIFIELTLKAEQEEYVQEGIRWTPIQYFNNKVVCDLIENKLSPPGIMSVLDDVCATMHATGGGADQTLLQKLQAAVGTHEHFNSWSAGFVIHHYAGKVSYDVSGFCERNRDVLFSDLIELMQTSEQAFLRMLFPEKLDGDKKGRPSTAGSKIKKQANDLVATLMRCTPHYIRCIKPNETKRPRDWEENRVKHQVEYLGLKENIRVRRAGFAYRRQFAKFLQRYAILTPETWPRWRGDERQGVQHLLRAVNMEPDQYQMGSTKVFVKNPESLFLLEEVRERKFDGFARTIQKAWRRHVAVRKYEEMREEASNILLNKKERRRNSINRNFVGDYLGLEERPELRQFLGKRERVDFADSVTKYDRRFKPIKRDLILTPKCVYVIGREKVKKGPEKGQVCEVLKKKVDIQALRGVSLSTRQDDFFILQEDAADSFLESVFKTEFVSLLCKRFEEATRRPLPLTFSDTLQFRVKKEGWGGGGTRSVTFSRGFGDLAVLKVGGRTLTVSVGDGLPKSSKPTRKGMAKGKPRRSSQAPTRAAPAPPRGMDRNGVPPSARGGPLPLEIMSGGGTHRPPRGPPSTSLGASRRPRARPPSEHNTEFLNVPDQGMAGMQRKRSVGQRPVPGVGRPKPQPRTHGPRCRALYQYVGQDVDELSFNVNEVIEILMEDPSGWWKGRLHGQEGLFPGNYVEKI</sequence>
<comment type="function">
    <text evidence="1">Myosins are actin-based motor molecules with ATPase activity. Unconventional myosins serve in intracellular movements. Their highly divergent tails are presumed to bind to membranous compartments, which would be moved relative to actin filaments (By similarity).</text>
</comment>
<comment type="interaction">
    <interactant intactId="EBI-741792">
        <id>O00160</id>
    </interactant>
    <interactant intactId="EBI-745689">
        <id>Q7L5A3</id>
        <label>ATOSB</label>
    </interactant>
    <organismsDiffer>false</organismsDiffer>
    <experiments>3</experiments>
</comment>
<comment type="interaction">
    <interactant intactId="EBI-741792">
        <id>O00160</id>
    </interactant>
    <interactant intactId="EBI-1051152">
        <id>Q92882</id>
        <label>OSTF1</label>
    </interactant>
    <organismsDiffer>false</organismsDiffer>
    <experiments>2</experiments>
</comment>
<comment type="interaction">
    <interactant intactId="EBI-741792">
        <id>O00160</id>
    </interactant>
    <interactant intactId="EBI-748391">
        <id>Q9BWG6</id>
        <label>SCNM1</label>
    </interactant>
    <organismsDiffer>false</organismsDiffer>
    <experiments>3</experiments>
</comment>
<comment type="interaction">
    <interactant intactId="EBI-741792">
        <id>O00160</id>
    </interactant>
    <interactant intactId="EBI-12304031">
        <id>P78314-3</id>
        <label>SH3BP2</label>
    </interactant>
    <organismsDiffer>false</organismsDiffer>
    <experiments>3</experiments>
</comment>
<comment type="disease">
    <text evidence="8">Defects in MYO1F has been found in a patient with a form of non-syndromic sensorineural hearing loss.</text>
</comment>
<comment type="similarity">
    <text evidence="9">Belongs to the TRAFAC class myosin-kinesin ATPase superfamily. Myosin family.</text>
</comment>
<comment type="caution">
    <text evidence="9">Represents an unconventional myosin. This protein should not be confused with the conventional myosin-1 (MYH1).</text>
</comment>
<proteinExistence type="evidence at protein level"/>
<name>MYO1F_HUMAN</name>
<dbReference type="EMBL" id="AJ310570">
    <property type="protein sequence ID" value="CAC83948.1"/>
    <property type="molecule type" value="mRNA"/>
</dbReference>
<dbReference type="EMBL" id="AK092877">
    <property type="protein sequence ID" value="BAC03995.1"/>
    <property type="molecule type" value="mRNA"/>
</dbReference>
<dbReference type="EMBL" id="AC092298">
    <property type="status" value="NOT_ANNOTATED_CDS"/>
    <property type="molecule type" value="Genomic_DNA"/>
</dbReference>
<dbReference type="EMBL" id="AC092316">
    <property type="status" value="NOT_ANNOTATED_CDS"/>
    <property type="molecule type" value="Genomic_DNA"/>
</dbReference>
<dbReference type="EMBL" id="AC124902">
    <property type="status" value="NOT_ANNOTATED_CDS"/>
    <property type="molecule type" value="Genomic_DNA"/>
</dbReference>
<dbReference type="EMBL" id="AC130469">
    <property type="status" value="NOT_ANNOTATED_CDS"/>
    <property type="molecule type" value="Genomic_DNA"/>
</dbReference>
<dbReference type="EMBL" id="BC028071">
    <property type="protein sequence ID" value="AAH28071.1"/>
    <property type="molecule type" value="mRNA"/>
</dbReference>
<dbReference type="EMBL" id="X98411">
    <property type="protein sequence ID" value="CAA67058.1"/>
    <property type="molecule type" value="mRNA"/>
</dbReference>
<dbReference type="CCDS" id="CCDS42494.1"/>
<dbReference type="RefSeq" id="NP_036467.2">
    <property type="nucleotide sequence ID" value="NM_012335.3"/>
</dbReference>
<dbReference type="SMR" id="O00160"/>
<dbReference type="BioGRID" id="110638">
    <property type="interactions" value="49"/>
</dbReference>
<dbReference type="FunCoup" id="O00160">
    <property type="interactions" value="392"/>
</dbReference>
<dbReference type="IntAct" id="O00160">
    <property type="interactions" value="22"/>
</dbReference>
<dbReference type="STRING" id="9606.ENSP00000494550"/>
<dbReference type="GlyGen" id="O00160">
    <property type="glycosylation" value="1 site, 1 O-linked glycan (1 site)"/>
</dbReference>
<dbReference type="iPTMnet" id="O00160"/>
<dbReference type="PhosphoSitePlus" id="O00160"/>
<dbReference type="BioMuta" id="MYO1F"/>
<dbReference type="jPOST" id="O00160"/>
<dbReference type="MassIVE" id="O00160"/>
<dbReference type="PaxDb" id="9606-ENSP00000344871"/>
<dbReference type="PeptideAtlas" id="O00160"/>
<dbReference type="PRIDE" id="O00160"/>
<dbReference type="ProteomicsDB" id="47747"/>
<dbReference type="Antibodypedia" id="53112">
    <property type="antibodies" value="59 antibodies from 18 providers"/>
</dbReference>
<dbReference type="DNASU" id="4542"/>
<dbReference type="Ensembl" id="ENST00000644032.2">
    <property type="protein sequence ID" value="ENSP00000494550.1"/>
    <property type="gene ID" value="ENSG00000142347.21"/>
</dbReference>
<dbReference type="Ensembl" id="ENST00000718254.1">
    <property type="protein sequence ID" value="ENSP00000520697.1"/>
    <property type="gene ID" value="ENSG00000142347.21"/>
</dbReference>
<dbReference type="GeneID" id="4542"/>
<dbReference type="KEGG" id="hsa:4542"/>
<dbReference type="MANE-Select" id="ENST00000644032.2">
    <property type="protein sequence ID" value="ENSP00000494550.1"/>
    <property type="RefSeq nucleotide sequence ID" value="NM_012335.4"/>
    <property type="RefSeq protein sequence ID" value="NP_036467.2"/>
</dbReference>
<dbReference type="UCSC" id="uc002mkg.4">
    <property type="organism name" value="human"/>
</dbReference>
<dbReference type="AGR" id="HGNC:7600"/>
<dbReference type="CTD" id="4542"/>
<dbReference type="DisGeNET" id="4542"/>
<dbReference type="GeneCards" id="MYO1F"/>
<dbReference type="HGNC" id="HGNC:7600">
    <property type="gene designation" value="MYO1F"/>
</dbReference>
<dbReference type="HPA" id="ENSG00000142347">
    <property type="expression patterns" value="Group enriched (bone marrow, lung, lymphoid tissue)"/>
</dbReference>
<dbReference type="MIM" id="601480">
    <property type="type" value="gene"/>
</dbReference>
<dbReference type="neXtProt" id="NX_O00160"/>
<dbReference type="OpenTargets" id="ENSG00000142347"/>
<dbReference type="PharmGKB" id="PA31402"/>
<dbReference type="VEuPathDB" id="HostDB:ENSG00000142347"/>
<dbReference type="eggNOG" id="KOG0162">
    <property type="taxonomic scope" value="Eukaryota"/>
</dbReference>
<dbReference type="GeneTree" id="ENSGT00940000158870"/>
<dbReference type="HOGENOM" id="CLU_000192_7_6_1"/>
<dbReference type="InParanoid" id="O00160"/>
<dbReference type="OMA" id="PPEEYQM"/>
<dbReference type="OrthoDB" id="6108017at2759"/>
<dbReference type="PAN-GO" id="O00160">
    <property type="GO annotations" value="9 GO annotations based on evolutionary models"/>
</dbReference>
<dbReference type="PhylomeDB" id="O00160"/>
<dbReference type="TreeFam" id="TF312960"/>
<dbReference type="PathwayCommons" id="O00160"/>
<dbReference type="SignaLink" id="O00160"/>
<dbReference type="BioGRID-ORCS" id="4542">
    <property type="hits" value="34 hits in 1150 CRISPR screens"/>
</dbReference>
<dbReference type="CD-CODE" id="FB4E32DD">
    <property type="entry name" value="Presynaptic clusters and postsynaptic densities"/>
</dbReference>
<dbReference type="ChiTaRS" id="MYO1F">
    <property type="organism name" value="human"/>
</dbReference>
<dbReference type="GeneWiki" id="MYO1F"/>
<dbReference type="GenomeRNAi" id="4542"/>
<dbReference type="Pharos" id="O00160">
    <property type="development level" value="Tbio"/>
</dbReference>
<dbReference type="PRO" id="PR:O00160"/>
<dbReference type="Proteomes" id="UP000005640">
    <property type="component" value="Chromosome 19"/>
</dbReference>
<dbReference type="RNAct" id="O00160">
    <property type="molecule type" value="protein"/>
</dbReference>
<dbReference type="Bgee" id="ENSG00000142347">
    <property type="expression patterns" value="Expressed in granulocyte and 161 other cell types or tissues"/>
</dbReference>
<dbReference type="ExpressionAtlas" id="O00160">
    <property type="expression patterns" value="baseline and differential"/>
</dbReference>
<dbReference type="GO" id="GO:0015629">
    <property type="term" value="C:actin cytoskeleton"/>
    <property type="evidence" value="ECO:0000318"/>
    <property type="project" value="GO_Central"/>
</dbReference>
<dbReference type="GO" id="GO:0005737">
    <property type="term" value="C:cytoplasm"/>
    <property type="evidence" value="ECO:0000318"/>
    <property type="project" value="GO_Central"/>
</dbReference>
<dbReference type="GO" id="GO:0005829">
    <property type="term" value="C:cytosol"/>
    <property type="evidence" value="ECO:0000314"/>
    <property type="project" value="HPA"/>
</dbReference>
<dbReference type="GO" id="GO:0005902">
    <property type="term" value="C:microvillus"/>
    <property type="evidence" value="ECO:0000318"/>
    <property type="project" value="GO_Central"/>
</dbReference>
<dbReference type="GO" id="GO:0005886">
    <property type="term" value="C:plasma membrane"/>
    <property type="evidence" value="ECO:0000318"/>
    <property type="project" value="GO_Central"/>
</dbReference>
<dbReference type="GO" id="GO:0016461">
    <property type="term" value="C:unconventional myosin complex"/>
    <property type="evidence" value="ECO:0000303"/>
    <property type="project" value="UniProtKB"/>
</dbReference>
<dbReference type="GO" id="GO:0003779">
    <property type="term" value="F:actin binding"/>
    <property type="evidence" value="ECO:0000303"/>
    <property type="project" value="UniProtKB"/>
</dbReference>
<dbReference type="GO" id="GO:0051015">
    <property type="term" value="F:actin filament binding"/>
    <property type="evidence" value="ECO:0000318"/>
    <property type="project" value="GO_Central"/>
</dbReference>
<dbReference type="GO" id="GO:0005524">
    <property type="term" value="F:ATP binding"/>
    <property type="evidence" value="ECO:0000303"/>
    <property type="project" value="UniProtKB"/>
</dbReference>
<dbReference type="GO" id="GO:0005516">
    <property type="term" value="F:calmodulin binding"/>
    <property type="evidence" value="ECO:0007669"/>
    <property type="project" value="UniProtKB-KW"/>
</dbReference>
<dbReference type="GO" id="GO:0000146">
    <property type="term" value="F:microfilament motor activity"/>
    <property type="evidence" value="ECO:0000318"/>
    <property type="project" value="GO_Central"/>
</dbReference>
<dbReference type="GO" id="GO:0007015">
    <property type="term" value="P:actin filament organization"/>
    <property type="evidence" value="ECO:0000318"/>
    <property type="project" value="GO_Central"/>
</dbReference>
<dbReference type="GO" id="GO:0006897">
    <property type="term" value="P:endocytosis"/>
    <property type="evidence" value="ECO:0000318"/>
    <property type="project" value="GO_Central"/>
</dbReference>
<dbReference type="CDD" id="cd01378">
    <property type="entry name" value="MYSc_Myo1"/>
    <property type="match status" value="1"/>
</dbReference>
<dbReference type="CDD" id="cd11827">
    <property type="entry name" value="SH3_MyoIe_If_like"/>
    <property type="match status" value="1"/>
</dbReference>
<dbReference type="FunFam" id="1.10.10.820:FF:000001">
    <property type="entry name" value="Myosin heavy chain"/>
    <property type="match status" value="1"/>
</dbReference>
<dbReference type="FunFam" id="1.20.5.4820:FF:000004">
    <property type="entry name" value="Myosin IE"/>
    <property type="match status" value="1"/>
</dbReference>
<dbReference type="FunFam" id="1.20.58.530:FF:000007">
    <property type="entry name" value="Myosin IE"/>
    <property type="match status" value="1"/>
</dbReference>
<dbReference type="FunFam" id="3.40.850.10:FF:000101">
    <property type="entry name" value="Slow myosin heavy chain 2"/>
    <property type="match status" value="1"/>
</dbReference>
<dbReference type="FunFam" id="2.30.30.40:FF:000072">
    <property type="entry name" value="Unconventional Myosin IB"/>
    <property type="match status" value="1"/>
</dbReference>
<dbReference type="FunFam" id="1.20.120.720:FF:000010">
    <property type="entry name" value="Unconventional myosin-Ie"/>
    <property type="match status" value="1"/>
</dbReference>
<dbReference type="Gene3D" id="1.10.10.820">
    <property type="match status" value="1"/>
</dbReference>
<dbReference type="Gene3D" id="1.20.5.4820">
    <property type="match status" value="1"/>
</dbReference>
<dbReference type="Gene3D" id="1.20.58.530">
    <property type="match status" value="1"/>
</dbReference>
<dbReference type="Gene3D" id="3.40.850.10">
    <property type="entry name" value="Kinesin motor domain"/>
    <property type="match status" value="1"/>
</dbReference>
<dbReference type="Gene3D" id="1.20.120.720">
    <property type="entry name" value="Myosin VI head, motor domain, U50 subdomain"/>
    <property type="match status" value="1"/>
</dbReference>
<dbReference type="Gene3D" id="2.30.30.40">
    <property type="entry name" value="SH3 Domains"/>
    <property type="match status" value="1"/>
</dbReference>
<dbReference type="InterPro" id="IPR035507">
    <property type="entry name" value="Ie/If_SH3"/>
</dbReference>
<dbReference type="InterPro" id="IPR036961">
    <property type="entry name" value="Kinesin_motor_dom_sf"/>
</dbReference>
<dbReference type="InterPro" id="IPR001609">
    <property type="entry name" value="Myosin_head_motor_dom-like"/>
</dbReference>
<dbReference type="InterPro" id="IPR010926">
    <property type="entry name" value="Myosin_TH1"/>
</dbReference>
<dbReference type="InterPro" id="IPR036072">
    <property type="entry name" value="MYSc_Myo1"/>
</dbReference>
<dbReference type="InterPro" id="IPR027417">
    <property type="entry name" value="P-loop_NTPase"/>
</dbReference>
<dbReference type="InterPro" id="IPR036028">
    <property type="entry name" value="SH3-like_dom_sf"/>
</dbReference>
<dbReference type="InterPro" id="IPR001452">
    <property type="entry name" value="SH3_domain"/>
</dbReference>
<dbReference type="PANTHER" id="PTHR13140">
    <property type="entry name" value="MYOSIN"/>
    <property type="match status" value="1"/>
</dbReference>
<dbReference type="PANTHER" id="PTHR13140:SF663">
    <property type="entry name" value="UNCONVENTIONAL MYOSIN-IF"/>
    <property type="match status" value="1"/>
</dbReference>
<dbReference type="Pfam" id="PF00063">
    <property type="entry name" value="Myosin_head"/>
    <property type="match status" value="1"/>
</dbReference>
<dbReference type="Pfam" id="PF06017">
    <property type="entry name" value="Myosin_TH1"/>
    <property type="match status" value="1"/>
</dbReference>
<dbReference type="Pfam" id="PF00018">
    <property type="entry name" value="SH3_1"/>
    <property type="match status" value="1"/>
</dbReference>
<dbReference type="PRINTS" id="PR00193">
    <property type="entry name" value="MYOSINHEAVY"/>
</dbReference>
<dbReference type="PRINTS" id="PR00452">
    <property type="entry name" value="SH3DOMAIN"/>
</dbReference>
<dbReference type="SMART" id="SM00242">
    <property type="entry name" value="MYSc"/>
    <property type="match status" value="1"/>
</dbReference>
<dbReference type="SMART" id="SM00326">
    <property type="entry name" value="SH3"/>
    <property type="match status" value="1"/>
</dbReference>
<dbReference type="SUPFAM" id="SSF52540">
    <property type="entry name" value="P-loop containing nucleoside triphosphate hydrolases"/>
    <property type="match status" value="1"/>
</dbReference>
<dbReference type="SUPFAM" id="SSF50044">
    <property type="entry name" value="SH3-domain"/>
    <property type="match status" value="1"/>
</dbReference>
<dbReference type="PROSITE" id="PS50096">
    <property type="entry name" value="IQ"/>
    <property type="match status" value="1"/>
</dbReference>
<dbReference type="PROSITE" id="PS51456">
    <property type="entry name" value="MYOSIN_MOTOR"/>
    <property type="match status" value="1"/>
</dbReference>
<dbReference type="PROSITE" id="PS50002">
    <property type="entry name" value="SH3"/>
    <property type="match status" value="1"/>
</dbReference>
<dbReference type="PROSITE" id="PS51757">
    <property type="entry name" value="TH1"/>
    <property type="match status" value="1"/>
</dbReference>
<protein>
    <recommendedName>
        <fullName>Unconventional myosin-If</fullName>
    </recommendedName>
    <alternativeName>
        <fullName>Myosin-Ie</fullName>
    </alternativeName>
</protein>